<organism>
    <name type="scientific">Thermodesulfovibrio yellowstonii (strain ATCC 51303 / DSM 11347 / YP87)</name>
    <dbReference type="NCBI Taxonomy" id="289376"/>
    <lineage>
        <taxon>Bacteria</taxon>
        <taxon>Pseudomonadati</taxon>
        <taxon>Nitrospirota</taxon>
        <taxon>Thermodesulfovibrionia</taxon>
        <taxon>Thermodesulfovibrionales</taxon>
        <taxon>Thermodesulfovibrionaceae</taxon>
        <taxon>Thermodesulfovibrio</taxon>
    </lineage>
</organism>
<evidence type="ECO:0000255" key="1">
    <source>
        <dbReference type="HAMAP-Rule" id="MF_00089"/>
    </source>
</evidence>
<reference key="1">
    <citation type="submission" date="2008-08" db="EMBL/GenBank/DDBJ databases">
        <title>The complete genome sequence of Thermodesulfovibrio yellowstonii strain ATCC 51303 / DSM 11347 / YP87.</title>
        <authorList>
            <person name="Dodson R.J."/>
            <person name="Durkin A.S."/>
            <person name="Wu M."/>
            <person name="Eisen J."/>
            <person name="Sutton G."/>
        </authorList>
    </citation>
    <scope>NUCLEOTIDE SEQUENCE [LARGE SCALE GENOMIC DNA]</scope>
    <source>
        <strain>ATCC 51303 / DSM 11347 / YP87</strain>
    </source>
</reference>
<protein>
    <recommendedName>
        <fullName evidence="1">Phosphomethylpyrimidine synthase</fullName>
        <ecNumber evidence="1">4.1.99.17</ecNumber>
    </recommendedName>
    <alternativeName>
        <fullName evidence="1">Hydroxymethylpyrimidine phosphate synthase</fullName>
        <shortName evidence="1">HMP-P synthase</shortName>
        <shortName evidence="1">HMP-phosphate synthase</shortName>
        <shortName evidence="1">HMPP synthase</shortName>
    </alternativeName>
    <alternativeName>
        <fullName evidence="1">Thiamine biosynthesis protein ThiC</fullName>
    </alternativeName>
</protein>
<name>THIC_THEYD</name>
<accession>B5YJ75</accession>
<comment type="function">
    <text evidence="1">Catalyzes the synthesis of the hydroxymethylpyrimidine phosphate (HMP-P) moiety of thiamine from aminoimidazole ribotide (AIR) in a radical S-adenosyl-L-methionine (SAM)-dependent reaction.</text>
</comment>
<comment type="catalytic activity">
    <reaction evidence="1">
        <text>5-amino-1-(5-phospho-beta-D-ribosyl)imidazole + S-adenosyl-L-methionine = 4-amino-2-methyl-5-(phosphooxymethyl)pyrimidine + CO + 5'-deoxyadenosine + formate + L-methionine + 3 H(+)</text>
        <dbReference type="Rhea" id="RHEA:24840"/>
        <dbReference type="ChEBI" id="CHEBI:15378"/>
        <dbReference type="ChEBI" id="CHEBI:15740"/>
        <dbReference type="ChEBI" id="CHEBI:17245"/>
        <dbReference type="ChEBI" id="CHEBI:17319"/>
        <dbReference type="ChEBI" id="CHEBI:57844"/>
        <dbReference type="ChEBI" id="CHEBI:58354"/>
        <dbReference type="ChEBI" id="CHEBI:59789"/>
        <dbReference type="ChEBI" id="CHEBI:137981"/>
        <dbReference type="EC" id="4.1.99.17"/>
    </reaction>
</comment>
<comment type="cofactor">
    <cofactor evidence="1">
        <name>[4Fe-4S] cluster</name>
        <dbReference type="ChEBI" id="CHEBI:49883"/>
    </cofactor>
    <text evidence="1">Binds 1 [4Fe-4S] cluster per subunit. The cluster is coordinated with 3 cysteines and an exchangeable S-adenosyl-L-methionine.</text>
</comment>
<comment type="pathway">
    <text evidence="1">Cofactor biosynthesis; thiamine diphosphate biosynthesis.</text>
</comment>
<comment type="similarity">
    <text evidence="1">Belongs to the ThiC family.</text>
</comment>
<gene>
    <name evidence="1" type="primary">thiC</name>
    <name type="ordered locus">THEYE_A0445</name>
</gene>
<sequence>MTRIEMAKKGIITEEVRQVAQEEGVFPEELSQNIAEGRVVITRNILRNIKPLGIGKGLRTKINANIGTSRDKTDIQEELEKLDIAVKYGADAVMDLSTGGPLTEMRRAILKHSSVSIGTVPIYEVAVRAIEKYGNIVKMTVDDIFNVIEEHAKDGVDFVTVHCGVTKKIVEMLKSGDRVLPIVSRGGSILADWICYHDKENPLYEYFDRLLELAKKYDLTLSLGDGLRPGCLADATDRYQLIELITIGKLKDIAISEGVQCIIEGPGHLPLNHVETNIKLQKSICKEAPFYVLGPLVTDCAMGYDHIAAAIGGALAGMYGADFLCYVTPSEHIRLPDKEDVKEGVIASRIAAHAADIAKGYAKAWQRDNKMAEARRNFDWQSQISLSFDPDKVHSMRSERPPLEDEKVCSMCGEFCAIKISRRAVE</sequence>
<feature type="chain" id="PRO_1000093244" description="Phosphomethylpyrimidine synthase">
    <location>
        <begin position="1"/>
        <end position="426"/>
    </location>
</feature>
<feature type="binding site" evidence="1">
    <location>
        <position position="65"/>
    </location>
    <ligand>
        <name>substrate</name>
    </ligand>
</feature>
<feature type="binding site" evidence="1">
    <location>
        <position position="94"/>
    </location>
    <ligand>
        <name>substrate</name>
    </ligand>
</feature>
<feature type="binding site" evidence="1">
    <location>
        <position position="123"/>
    </location>
    <ligand>
        <name>substrate</name>
    </ligand>
</feature>
<feature type="binding site" evidence="1">
    <location>
        <position position="162"/>
    </location>
    <ligand>
        <name>substrate</name>
    </ligand>
</feature>
<feature type="binding site" evidence="1">
    <location>
        <begin position="184"/>
        <end position="186"/>
    </location>
    <ligand>
        <name>substrate</name>
    </ligand>
</feature>
<feature type="binding site" evidence="1">
    <location>
        <begin position="225"/>
        <end position="228"/>
    </location>
    <ligand>
        <name>substrate</name>
    </ligand>
</feature>
<feature type="binding site" evidence="1">
    <location>
        <position position="264"/>
    </location>
    <ligand>
        <name>substrate</name>
    </ligand>
</feature>
<feature type="binding site" evidence="1">
    <location>
        <position position="268"/>
    </location>
    <ligand>
        <name>Zn(2+)</name>
        <dbReference type="ChEBI" id="CHEBI:29105"/>
    </ligand>
</feature>
<feature type="binding site" evidence="1">
    <location>
        <position position="291"/>
    </location>
    <ligand>
        <name>substrate</name>
    </ligand>
</feature>
<feature type="binding site" evidence="1">
    <location>
        <position position="332"/>
    </location>
    <ligand>
        <name>Zn(2+)</name>
        <dbReference type="ChEBI" id="CHEBI:29105"/>
    </ligand>
</feature>
<feature type="binding site" evidence="1">
    <location>
        <position position="409"/>
    </location>
    <ligand>
        <name>[4Fe-4S] cluster</name>
        <dbReference type="ChEBI" id="CHEBI:49883"/>
        <note>4Fe-4S-S-AdoMet</note>
    </ligand>
</feature>
<feature type="binding site" evidence="1">
    <location>
        <position position="412"/>
    </location>
    <ligand>
        <name>[4Fe-4S] cluster</name>
        <dbReference type="ChEBI" id="CHEBI:49883"/>
        <note>4Fe-4S-S-AdoMet</note>
    </ligand>
</feature>
<feature type="binding site" evidence="1">
    <location>
        <position position="416"/>
    </location>
    <ligand>
        <name>[4Fe-4S] cluster</name>
        <dbReference type="ChEBI" id="CHEBI:49883"/>
        <note>4Fe-4S-S-AdoMet</note>
    </ligand>
</feature>
<dbReference type="EC" id="4.1.99.17" evidence="1"/>
<dbReference type="EMBL" id="CP001147">
    <property type="protein sequence ID" value="ACI22084.1"/>
    <property type="molecule type" value="Genomic_DNA"/>
</dbReference>
<dbReference type="RefSeq" id="WP_012546777.1">
    <property type="nucleotide sequence ID" value="NC_011296.1"/>
</dbReference>
<dbReference type="RefSeq" id="YP_002248290.1">
    <property type="nucleotide sequence ID" value="NC_011296.1"/>
</dbReference>
<dbReference type="SMR" id="B5YJ75"/>
<dbReference type="FunCoup" id="B5YJ75">
    <property type="interactions" value="425"/>
</dbReference>
<dbReference type="STRING" id="289376.THEYE_A0445"/>
<dbReference type="EnsemblBacteria" id="ACI22084">
    <property type="protein sequence ID" value="ACI22084"/>
    <property type="gene ID" value="THEYE_A0445"/>
</dbReference>
<dbReference type="KEGG" id="tye:THEYE_A0445"/>
<dbReference type="PATRIC" id="fig|289376.4.peg.440"/>
<dbReference type="eggNOG" id="COG0422">
    <property type="taxonomic scope" value="Bacteria"/>
</dbReference>
<dbReference type="HOGENOM" id="CLU_013181_2_2_0"/>
<dbReference type="InParanoid" id="B5YJ75"/>
<dbReference type="OrthoDB" id="9805897at2"/>
<dbReference type="UniPathway" id="UPA00060"/>
<dbReference type="Proteomes" id="UP000000718">
    <property type="component" value="Chromosome"/>
</dbReference>
<dbReference type="GO" id="GO:0005829">
    <property type="term" value="C:cytosol"/>
    <property type="evidence" value="ECO:0000318"/>
    <property type="project" value="GO_Central"/>
</dbReference>
<dbReference type="GO" id="GO:0051539">
    <property type="term" value="F:4 iron, 4 sulfur cluster binding"/>
    <property type="evidence" value="ECO:0007669"/>
    <property type="project" value="UniProtKB-KW"/>
</dbReference>
<dbReference type="GO" id="GO:0016830">
    <property type="term" value="F:carbon-carbon lyase activity"/>
    <property type="evidence" value="ECO:0007669"/>
    <property type="project" value="InterPro"/>
</dbReference>
<dbReference type="GO" id="GO:0008270">
    <property type="term" value="F:zinc ion binding"/>
    <property type="evidence" value="ECO:0007669"/>
    <property type="project" value="UniProtKB-UniRule"/>
</dbReference>
<dbReference type="GO" id="GO:0009228">
    <property type="term" value="P:thiamine biosynthetic process"/>
    <property type="evidence" value="ECO:0000318"/>
    <property type="project" value="GO_Central"/>
</dbReference>
<dbReference type="GO" id="GO:0009229">
    <property type="term" value="P:thiamine diphosphate biosynthetic process"/>
    <property type="evidence" value="ECO:0007669"/>
    <property type="project" value="UniProtKB-UniRule"/>
</dbReference>
<dbReference type="FunFam" id="3.20.20.540:FF:000001">
    <property type="entry name" value="Phosphomethylpyrimidine synthase"/>
    <property type="match status" value="1"/>
</dbReference>
<dbReference type="Gene3D" id="6.10.250.620">
    <property type="match status" value="1"/>
</dbReference>
<dbReference type="Gene3D" id="3.20.20.540">
    <property type="entry name" value="Radical SAM ThiC family, central domain"/>
    <property type="match status" value="1"/>
</dbReference>
<dbReference type="HAMAP" id="MF_00089">
    <property type="entry name" value="ThiC"/>
    <property type="match status" value="1"/>
</dbReference>
<dbReference type="InterPro" id="IPR037509">
    <property type="entry name" value="ThiC"/>
</dbReference>
<dbReference type="InterPro" id="IPR038521">
    <property type="entry name" value="ThiC/Bza_core_dom"/>
</dbReference>
<dbReference type="InterPro" id="IPR002817">
    <property type="entry name" value="ThiC/BzaA/B"/>
</dbReference>
<dbReference type="NCBIfam" id="NF009895">
    <property type="entry name" value="PRK13352.1"/>
    <property type="match status" value="1"/>
</dbReference>
<dbReference type="NCBIfam" id="TIGR00190">
    <property type="entry name" value="thiC"/>
    <property type="match status" value="1"/>
</dbReference>
<dbReference type="PANTHER" id="PTHR30557:SF1">
    <property type="entry name" value="PHOSPHOMETHYLPYRIMIDINE SYNTHASE, CHLOROPLASTIC"/>
    <property type="match status" value="1"/>
</dbReference>
<dbReference type="PANTHER" id="PTHR30557">
    <property type="entry name" value="THIAMINE BIOSYNTHESIS PROTEIN THIC"/>
    <property type="match status" value="1"/>
</dbReference>
<dbReference type="Pfam" id="PF01964">
    <property type="entry name" value="ThiC_Rad_SAM"/>
    <property type="match status" value="1"/>
</dbReference>
<dbReference type="SFLD" id="SFLDF00407">
    <property type="entry name" value="phosphomethylpyrimidine_syntha"/>
    <property type="match status" value="1"/>
</dbReference>
<dbReference type="SFLD" id="SFLDG01114">
    <property type="entry name" value="phosphomethylpyrimidine_syntha"/>
    <property type="match status" value="1"/>
</dbReference>
<dbReference type="SFLD" id="SFLDS00113">
    <property type="entry name" value="Radical_SAM_Phosphomethylpyrim"/>
    <property type="match status" value="1"/>
</dbReference>
<keyword id="KW-0004">4Fe-4S</keyword>
<keyword id="KW-0408">Iron</keyword>
<keyword id="KW-0411">Iron-sulfur</keyword>
<keyword id="KW-0456">Lyase</keyword>
<keyword id="KW-0479">Metal-binding</keyword>
<keyword id="KW-1185">Reference proteome</keyword>
<keyword id="KW-0949">S-adenosyl-L-methionine</keyword>
<keyword id="KW-0784">Thiamine biosynthesis</keyword>
<keyword id="KW-0862">Zinc</keyword>
<proteinExistence type="inferred from homology"/>